<protein>
    <recommendedName>
        <fullName evidence="1">Ribosome-recycling factor</fullName>
        <shortName evidence="1">RRF</shortName>
    </recommendedName>
    <alternativeName>
        <fullName evidence="1">Ribosome-releasing factor</fullName>
    </alternativeName>
</protein>
<gene>
    <name evidence="1" type="primary">frr</name>
    <name type="synonym">rrf1</name>
    <name type="ordered locus">SMU_1624</name>
</gene>
<organism>
    <name type="scientific">Streptococcus mutans serotype c (strain ATCC 700610 / UA159)</name>
    <dbReference type="NCBI Taxonomy" id="210007"/>
    <lineage>
        <taxon>Bacteria</taxon>
        <taxon>Bacillati</taxon>
        <taxon>Bacillota</taxon>
        <taxon>Bacilli</taxon>
        <taxon>Lactobacillales</taxon>
        <taxon>Streptococcaceae</taxon>
        <taxon>Streptococcus</taxon>
    </lineage>
</organism>
<evidence type="ECO:0000255" key="1">
    <source>
        <dbReference type="HAMAP-Rule" id="MF_00040"/>
    </source>
</evidence>
<dbReference type="EMBL" id="AE014133">
    <property type="protein sequence ID" value="AAN59265.1"/>
    <property type="molecule type" value="Genomic_DNA"/>
</dbReference>
<dbReference type="RefSeq" id="NP_721959.1">
    <property type="nucleotide sequence ID" value="NC_004350.2"/>
</dbReference>
<dbReference type="RefSeq" id="WP_002262766.1">
    <property type="nucleotide sequence ID" value="NC_004350.2"/>
</dbReference>
<dbReference type="SMR" id="Q8DSY2"/>
<dbReference type="STRING" id="210007.SMU_1624"/>
<dbReference type="GeneID" id="93858949"/>
<dbReference type="KEGG" id="smu:SMU_1624"/>
<dbReference type="PATRIC" id="fig|210007.7.peg.1447"/>
<dbReference type="eggNOG" id="COG0233">
    <property type="taxonomic scope" value="Bacteria"/>
</dbReference>
<dbReference type="HOGENOM" id="CLU_073981_2_0_9"/>
<dbReference type="OrthoDB" id="9804006at2"/>
<dbReference type="PhylomeDB" id="Q8DSY2"/>
<dbReference type="Proteomes" id="UP000002512">
    <property type="component" value="Chromosome"/>
</dbReference>
<dbReference type="GO" id="GO:0005737">
    <property type="term" value="C:cytoplasm"/>
    <property type="evidence" value="ECO:0007669"/>
    <property type="project" value="UniProtKB-SubCell"/>
</dbReference>
<dbReference type="GO" id="GO:0043023">
    <property type="term" value="F:ribosomal large subunit binding"/>
    <property type="evidence" value="ECO:0007669"/>
    <property type="project" value="TreeGrafter"/>
</dbReference>
<dbReference type="GO" id="GO:0006415">
    <property type="term" value="P:translational termination"/>
    <property type="evidence" value="ECO:0007669"/>
    <property type="project" value="UniProtKB-UniRule"/>
</dbReference>
<dbReference type="CDD" id="cd00520">
    <property type="entry name" value="RRF"/>
    <property type="match status" value="1"/>
</dbReference>
<dbReference type="FunFam" id="1.10.132.20:FF:000001">
    <property type="entry name" value="Ribosome-recycling factor"/>
    <property type="match status" value="1"/>
</dbReference>
<dbReference type="FunFam" id="3.30.1360.40:FF:000001">
    <property type="entry name" value="Ribosome-recycling factor"/>
    <property type="match status" value="1"/>
</dbReference>
<dbReference type="Gene3D" id="3.30.1360.40">
    <property type="match status" value="1"/>
</dbReference>
<dbReference type="Gene3D" id="1.10.132.20">
    <property type="entry name" value="Ribosome-recycling factor"/>
    <property type="match status" value="1"/>
</dbReference>
<dbReference type="HAMAP" id="MF_00040">
    <property type="entry name" value="RRF"/>
    <property type="match status" value="1"/>
</dbReference>
<dbReference type="InterPro" id="IPR002661">
    <property type="entry name" value="Ribosome_recyc_fac"/>
</dbReference>
<dbReference type="InterPro" id="IPR023584">
    <property type="entry name" value="Ribosome_recyc_fac_dom"/>
</dbReference>
<dbReference type="InterPro" id="IPR036191">
    <property type="entry name" value="RRF_sf"/>
</dbReference>
<dbReference type="NCBIfam" id="TIGR00496">
    <property type="entry name" value="frr"/>
    <property type="match status" value="1"/>
</dbReference>
<dbReference type="PANTHER" id="PTHR20982:SF3">
    <property type="entry name" value="MITOCHONDRIAL RIBOSOME RECYCLING FACTOR PSEUDO 1"/>
    <property type="match status" value="1"/>
</dbReference>
<dbReference type="PANTHER" id="PTHR20982">
    <property type="entry name" value="RIBOSOME RECYCLING FACTOR"/>
    <property type="match status" value="1"/>
</dbReference>
<dbReference type="Pfam" id="PF01765">
    <property type="entry name" value="RRF"/>
    <property type="match status" value="1"/>
</dbReference>
<dbReference type="SUPFAM" id="SSF55194">
    <property type="entry name" value="Ribosome recycling factor, RRF"/>
    <property type="match status" value="1"/>
</dbReference>
<comment type="function">
    <text evidence="1">Responsible for the release of ribosomes from messenger RNA at the termination of protein biosynthesis. May increase the efficiency of translation by recycling ribosomes from one round of translation to another.</text>
</comment>
<comment type="subcellular location">
    <subcellularLocation>
        <location evidence="1">Cytoplasm</location>
    </subcellularLocation>
</comment>
<comment type="similarity">
    <text evidence="1">Belongs to the RRF family.</text>
</comment>
<accession>Q8DSY2</accession>
<feature type="chain" id="PRO_0000167551" description="Ribosome-recycling factor">
    <location>
        <begin position="1"/>
        <end position="185"/>
    </location>
</feature>
<reference key="1">
    <citation type="journal article" date="2002" name="Proc. Natl. Acad. Sci. U.S.A.">
        <title>Genome sequence of Streptococcus mutans UA159, a cariogenic dental pathogen.</title>
        <authorList>
            <person name="Ajdic D.J."/>
            <person name="McShan W.M."/>
            <person name="McLaughlin R.E."/>
            <person name="Savic G."/>
            <person name="Chang J."/>
            <person name="Carson M.B."/>
            <person name="Primeaux C."/>
            <person name="Tian R."/>
            <person name="Kenton S."/>
            <person name="Jia H.G."/>
            <person name="Lin S.P."/>
            <person name="Qian Y."/>
            <person name="Li S."/>
            <person name="Zhu H."/>
            <person name="Najar F.Z."/>
            <person name="Lai H."/>
            <person name="White J."/>
            <person name="Roe B.A."/>
            <person name="Ferretti J.J."/>
        </authorList>
    </citation>
    <scope>NUCLEOTIDE SEQUENCE [LARGE SCALE GENOMIC DNA]</scope>
    <source>
        <strain>ATCC 700610 / UA159</strain>
    </source>
</reference>
<name>RRF_STRMU</name>
<sequence length="185" mass="20643">MANAIVEKAKERFEQSHQSLAREFGSIRAGRANASLLDRIEVEYYGVPTPLNQLASITVPEARVLLVSPFDKSSLKDIEHAINASDIGINPANDGSVIRLVIPALTEETRKELAKEVKKVGENAKVAIRNIRRDAMDEAKKQEKIKEITEDELKSLEKDIQKVTDEAVKHIDSMTANKEKELLEV</sequence>
<keyword id="KW-0963">Cytoplasm</keyword>
<keyword id="KW-0648">Protein biosynthesis</keyword>
<keyword id="KW-1185">Reference proteome</keyword>
<proteinExistence type="inferred from homology"/>